<protein>
    <recommendedName>
        <fullName evidence="1">Ion-translocating oxidoreductase complex subunit B</fullName>
        <ecNumber evidence="1">7.-.-.-</ecNumber>
    </recommendedName>
    <alternativeName>
        <fullName evidence="1">Rnf electron transport complex subunit B</fullName>
    </alternativeName>
</protein>
<feature type="chain" id="PRO_1000013635" description="Ion-translocating oxidoreductase complex subunit B">
    <location>
        <begin position="1"/>
        <end position="194"/>
    </location>
</feature>
<feature type="domain" description="4Fe-4S" evidence="1">
    <location>
        <begin position="32"/>
        <end position="90"/>
    </location>
</feature>
<feature type="domain" description="4Fe-4S ferredoxin-type 1" evidence="1">
    <location>
        <begin position="107"/>
        <end position="136"/>
    </location>
</feature>
<feature type="domain" description="4Fe-4S ferredoxin-type 2" evidence="1">
    <location>
        <begin position="137"/>
        <end position="166"/>
    </location>
</feature>
<feature type="region of interest" description="Hydrophobic" evidence="1">
    <location>
        <begin position="1"/>
        <end position="26"/>
    </location>
</feature>
<feature type="binding site" evidence="1">
    <location>
        <position position="49"/>
    </location>
    <ligand>
        <name>[4Fe-4S] cluster</name>
        <dbReference type="ChEBI" id="CHEBI:49883"/>
        <label>1</label>
    </ligand>
</feature>
<feature type="binding site" evidence="1">
    <location>
        <position position="52"/>
    </location>
    <ligand>
        <name>[4Fe-4S] cluster</name>
        <dbReference type="ChEBI" id="CHEBI:49883"/>
        <label>1</label>
    </ligand>
</feature>
<feature type="binding site" evidence="1">
    <location>
        <position position="57"/>
    </location>
    <ligand>
        <name>[4Fe-4S] cluster</name>
        <dbReference type="ChEBI" id="CHEBI:49883"/>
        <label>1</label>
    </ligand>
</feature>
<feature type="binding site" evidence="1">
    <location>
        <position position="73"/>
    </location>
    <ligand>
        <name>[4Fe-4S] cluster</name>
        <dbReference type="ChEBI" id="CHEBI:49883"/>
        <label>1</label>
    </ligand>
</feature>
<feature type="binding site" evidence="1">
    <location>
        <position position="116"/>
    </location>
    <ligand>
        <name>[4Fe-4S] cluster</name>
        <dbReference type="ChEBI" id="CHEBI:49883"/>
        <label>2</label>
    </ligand>
</feature>
<feature type="binding site" evidence="1">
    <location>
        <position position="119"/>
    </location>
    <ligand>
        <name>[4Fe-4S] cluster</name>
        <dbReference type="ChEBI" id="CHEBI:49883"/>
        <label>2</label>
    </ligand>
</feature>
<feature type="binding site" evidence="1">
    <location>
        <position position="122"/>
    </location>
    <ligand>
        <name>[4Fe-4S] cluster</name>
        <dbReference type="ChEBI" id="CHEBI:49883"/>
        <label>2</label>
    </ligand>
</feature>
<feature type="binding site" evidence="1">
    <location>
        <position position="126"/>
    </location>
    <ligand>
        <name>[4Fe-4S] cluster</name>
        <dbReference type="ChEBI" id="CHEBI:49883"/>
        <label>3</label>
    </ligand>
</feature>
<feature type="binding site" evidence="1">
    <location>
        <position position="146"/>
    </location>
    <ligand>
        <name>[4Fe-4S] cluster</name>
        <dbReference type="ChEBI" id="CHEBI:49883"/>
        <label>3</label>
    </ligand>
</feature>
<feature type="binding site" evidence="1">
    <location>
        <position position="149"/>
    </location>
    <ligand>
        <name>[4Fe-4S] cluster</name>
        <dbReference type="ChEBI" id="CHEBI:49883"/>
        <label>3</label>
    </ligand>
</feature>
<feature type="binding site" evidence="1">
    <location>
        <position position="152"/>
    </location>
    <ligand>
        <name>[4Fe-4S] cluster</name>
        <dbReference type="ChEBI" id="CHEBI:49883"/>
        <label>3</label>
    </ligand>
</feature>
<feature type="binding site" evidence="1">
    <location>
        <position position="156"/>
    </location>
    <ligand>
        <name>[4Fe-4S] cluster</name>
        <dbReference type="ChEBI" id="CHEBI:49883"/>
        <label>2</label>
    </ligand>
</feature>
<dbReference type="EC" id="7.-.-.-" evidence="1"/>
<dbReference type="EMBL" id="AM286690">
    <property type="protein sequence ID" value="CAL17058.1"/>
    <property type="molecule type" value="Genomic_DNA"/>
</dbReference>
<dbReference type="STRING" id="393595.ABO_1610"/>
<dbReference type="KEGG" id="abo:ABO_1610"/>
<dbReference type="eggNOG" id="COG2878">
    <property type="taxonomic scope" value="Bacteria"/>
</dbReference>
<dbReference type="HOGENOM" id="CLU_063448_2_0_6"/>
<dbReference type="OrthoDB" id="9789936at2"/>
<dbReference type="Proteomes" id="UP000008871">
    <property type="component" value="Chromosome"/>
</dbReference>
<dbReference type="GO" id="GO:0005886">
    <property type="term" value="C:plasma membrane"/>
    <property type="evidence" value="ECO:0007669"/>
    <property type="project" value="UniProtKB-SubCell"/>
</dbReference>
<dbReference type="GO" id="GO:0051539">
    <property type="term" value="F:4 iron, 4 sulfur cluster binding"/>
    <property type="evidence" value="ECO:0007669"/>
    <property type="project" value="UniProtKB-UniRule"/>
</dbReference>
<dbReference type="GO" id="GO:0009055">
    <property type="term" value="F:electron transfer activity"/>
    <property type="evidence" value="ECO:0007669"/>
    <property type="project" value="InterPro"/>
</dbReference>
<dbReference type="GO" id="GO:0046872">
    <property type="term" value="F:metal ion binding"/>
    <property type="evidence" value="ECO:0007669"/>
    <property type="project" value="UniProtKB-KW"/>
</dbReference>
<dbReference type="GO" id="GO:0022900">
    <property type="term" value="P:electron transport chain"/>
    <property type="evidence" value="ECO:0007669"/>
    <property type="project" value="UniProtKB-UniRule"/>
</dbReference>
<dbReference type="FunFam" id="1.10.15.40:FF:000001">
    <property type="entry name" value="Ion-translocating oxidoreductase complex subunit B"/>
    <property type="match status" value="1"/>
</dbReference>
<dbReference type="Gene3D" id="3.30.70.20">
    <property type="match status" value="1"/>
</dbReference>
<dbReference type="Gene3D" id="1.10.15.40">
    <property type="entry name" value="Electron transport complex subunit B, putative Fe-S cluster"/>
    <property type="match status" value="1"/>
</dbReference>
<dbReference type="HAMAP" id="MF_00463">
    <property type="entry name" value="RsxB_RnfB"/>
    <property type="match status" value="1"/>
</dbReference>
<dbReference type="InterPro" id="IPR007202">
    <property type="entry name" value="4Fe-4S_dom"/>
</dbReference>
<dbReference type="InterPro" id="IPR017896">
    <property type="entry name" value="4Fe4S_Fe-S-bd"/>
</dbReference>
<dbReference type="InterPro" id="IPR017900">
    <property type="entry name" value="4Fe4S_Fe_S_CS"/>
</dbReference>
<dbReference type="InterPro" id="IPR010207">
    <property type="entry name" value="Elect_transpt_cplx_RnfB/RsxB"/>
</dbReference>
<dbReference type="InterPro" id="IPR016463">
    <property type="entry name" value="RnfB/RsxB_Proteobac"/>
</dbReference>
<dbReference type="InterPro" id="IPR050294">
    <property type="entry name" value="RnfB_subfamily"/>
</dbReference>
<dbReference type="NCBIfam" id="NF003475">
    <property type="entry name" value="PRK05113.1"/>
    <property type="match status" value="1"/>
</dbReference>
<dbReference type="NCBIfam" id="TIGR01944">
    <property type="entry name" value="rnfB"/>
    <property type="match status" value="1"/>
</dbReference>
<dbReference type="PANTHER" id="PTHR42859:SF3">
    <property type="entry name" value="ION-TRANSLOCATING OXIDOREDUCTASE COMPLEX SUBUNIT B"/>
    <property type="match status" value="1"/>
</dbReference>
<dbReference type="PANTHER" id="PTHR42859">
    <property type="entry name" value="OXIDOREDUCTASE"/>
    <property type="match status" value="1"/>
</dbReference>
<dbReference type="Pfam" id="PF14697">
    <property type="entry name" value="Fer4_21"/>
    <property type="match status" value="1"/>
</dbReference>
<dbReference type="Pfam" id="PF04060">
    <property type="entry name" value="FeS"/>
    <property type="match status" value="1"/>
</dbReference>
<dbReference type="PIRSF" id="PIRSF005784">
    <property type="entry name" value="Elect_transpt_RnfB"/>
    <property type="match status" value="1"/>
</dbReference>
<dbReference type="SUPFAM" id="SSF54862">
    <property type="entry name" value="4Fe-4S ferredoxins"/>
    <property type="match status" value="1"/>
</dbReference>
<dbReference type="PROSITE" id="PS51656">
    <property type="entry name" value="4FE4S"/>
    <property type="match status" value="1"/>
</dbReference>
<dbReference type="PROSITE" id="PS00198">
    <property type="entry name" value="4FE4S_FER_1"/>
    <property type="match status" value="2"/>
</dbReference>
<dbReference type="PROSITE" id="PS51379">
    <property type="entry name" value="4FE4S_FER_2"/>
    <property type="match status" value="2"/>
</dbReference>
<comment type="function">
    <text evidence="1">Part of a membrane-bound complex that couples electron transfer with translocation of ions across the membrane.</text>
</comment>
<comment type="cofactor">
    <cofactor evidence="1">
        <name>[4Fe-4S] cluster</name>
        <dbReference type="ChEBI" id="CHEBI:49883"/>
    </cofactor>
    <text evidence="1">Binds 3 [4Fe-4S] clusters.</text>
</comment>
<comment type="subunit">
    <text evidence="1">The complex is composed of six subunits: RnfA, RnfB, RnfC, RnfD, RnfE and RnfG.</text>
</comment>
<comment type="subcellular location">
    <subcellularLocation>
        <location evidence="1">Cell inner membrane</location>
    </subcellularLocation>
</comment>
<comment type="similarity">
    <text evidence="1">Belongs to the 4Fe4S bacterial-type ferredoxin family. RnfB subfamily.</text>
</comment>
<proteinExistence type="inferred from homology"/>
<name>RNFB_ALCBS</name>
<reference key="1">
    <citation type="journal article" date="2006" name="Nat. Biotechnol.">
        <title>Genome sequence of the ubiquitous hydrocarbon-degrading marine bacterium Alcanivorax borkumensis.</title>
        <authorList>
            <person name="Schneiker S."/>
            <person name="Martins dos Santos V.A.P."/>
            <person name="Bartels D."/>
            <person name="Bekel T."/>
            <person name="Brecht M."/>
            <person name="Buhrmester J."/>
            <person name="Chernikova T.N."/>
            <person name="Denaro R."/>
            <person name="Ferrer M."/>
            <person name="Gertler C."/>
            <person name="Goesmann A."/>
            <person name="Golyshina O.V."/>
            <person name="Kaminski F."/>
            <person name="Khachane A.N."/>
            <person name="Lang S."/>
            <person name="Linke B."/>
            <person name="McHardy A.C."/>
            <person name="Meyer F."/>
            <person name="Nechitaylo T."/>
            <person name="Puehler A."/>
            <person name="Regenhardt D."/>
            <person name="Rupp O."/>
            <person name="Sabirova J.S."/>
            <person name="Selbitschka W."/>
            <person name="Yakimov M.M."/>
            <person name="Timmis K.N."/>
            <person name="Vorhoelter F.-J."/>
            <person name="Weidner S."/>
            <person name="Kaiser O."/>
            <person name="Golyshin P.N."/>
        </authorList>
    </citation>
    <scope>NUCLEOTIDE SEQUENCE [LARGE SCALE GENOMIC DNA]</scope>
    <source>
        <strain>ATCC 700651 / DSM 11573 / NCIMB 13689 / SK2</strain>
    </source>
</reference>
<organism>
    <name type="scientific">Alcanivorax borkumensis (strain ATCC 700651 / DSM 11573 / NCIMB 13689 / SK2)</name>
    <dbReference type="NCBI Taxonomy" id="393595"/>
    <lineage>
        <taxon>Bacteria</taxon>
        <taxon>Pseudomonadati</taxon>
        <taxon>Pseudomonadota</taxon>
        <taxon>Gammaproteobacteria</taxon>
        <taxon>Oceanospirillales</taxon>
        <taxon>Alcanivoracaceae</taxon>
        <taxon>Alcanivorax</taxon>
    </lineage>
</organism>
<evidence type="ECO:0000255" key="1">
    <source>
        <dbReference type="HAMAP-Rule" id="MF_00463"/>
    </source>
</evidence>
<gene>
    <name evidence="1" type="primary">rnfB</name>
    <name type="ordered locus">ABO_1610</name>
</gene>
<accession>Q0VP40</accession>
<sequence>MSGVLIAVAALLALAAVFGAVLGFASEKFKVEGDPIVDQIDSLLPQTQCGQCGHPGCRPYAEAIAEGEEHNRCPPGGQDTVVALSELLGREELTLDDEGAEDANVAKVAYIREDECIGCTKCIQACPVDAIVGAAKLMHTVIVDECTGCDLCVEPCPVDCIDMLEVKPTLQTWGWQRPAGIGERPDSRIEVVNL</sequence>
<keyword id="KW-0004">4Fe-4S</keyword>
<keyword id="KW-0997">Cell inner membrane</keyword>
<keyword id="KW-1003">Cell membrane</keyword>
<keyword id="KW-0249">Electron transport</keyword>
<keyword id="KW-0408">Iron</keyword>
<keyword id="KW-0411">Iron-sulfur</keyword>
<keyword id="KW-0472">Membrane</keyword>
<keyword id="KW-0479">Metal-binding</keyword>
<keyword id="KW-1185">Reference proteome</keyword>
<keyword id="KW-0677">Repeat</keyword>
<keyword id="KW-1278">Translocase</keyword>
<keyword id="KW-0813">Transport</keyword>